<organism evidence="7">
    <name type="scientific">Caenorhabditis elegans</name>
    <dbReference type="NCBI Taxonomy" id="6239"/>
    <lineage>
        <taxon>Eukaryota</taxon>
        <taxon>Metazoa</taxon>
        <taxon>Ecdysozoa</taxon>
        <taxon>Nematoda</taxon>
        <taxon>Chromadorea</taxon>
        <taxon>Rhabditida</taxon>
        <taxon>Rhabditina</taxon>
        <taxon>Rhabditomorpha</taxon>
        <taxon>Rhabditoidea</taxon>
        <taxon>Rhabditidae</taxon>
        <taxon>Peloderinae</taxon>
        <taxon>Caenorhabditis</taxon>
    </lineage>
</organism>
<comment type="function">
    <text evidence="4 5">Required for olfactory plasticity, which is the change from positive chemotaxis to dispersal after prolonged exposure to an odorant. Thought to antagonise snet-1 by degrading excess snet-1 peptides and thus enabling olfactory plasticity.</text>
</comment>
<comment type="cofactor">
    <cofactor evidence="1">
        <name>Zn(2+)</name>
        <dbReference type="ChEBI" id="CHEBI:29105"/>
    </cofactor>
    <text evidence="1">Binds 1 zinc ion per subunit.</text>
</comment>
<comment type="subcellular location">
    <subcellularLocation>
        <location evidence="2">Membrane</location>
        <topology evidence="2">Single-pass type II membrane protein</topology>
    </subcellularLocation>
</comment>
<comment type="tissue specificity">
    <text evidence="4">Expressed in muscle cells, GLR cells, SMB motor neurons and AIM interneurons.</text>
</comment>
<comment type="disruption phenotype">
    <text evidence="4">Severe defect in olfactory plasticity in response to the odorants benzaldehyde, isoamylalcohol, diacetyl and pyrazine.</text>
</comment>
<comment type="similarity">
    <text evidence="3">Belongs to the peptidase M13 family.</text>
</comment>
<protein>
    <recommendedName>
        <fullName evidence="9">Neprilysin-2</fullName>
        <ecNumber evidence="6">3.4.24.-</ecNumber>
    </recommendedName>
</protein>
<name>NEPL2_CAEEL</name>
<accession>O44857</accession>
<feature type="chain" id="PRO_0000431419" description="Neprilysin-2">
    <location>
        <begin position="1"/>
        <end position="736"/>
    </location>
</feature>
<feature type="topological domain" description="Cytoplasmic">
    <location>
        <begin position="1"/>
        <end position="19"/>
    </location>
</feature>
<feature type="transmembrane region" description="Helical; Signal-anchor for type II membrane protein" evidence="2">
    <location>
        <begin position="20"/>
        <end position="40"/>
    </location>
</feature>
<feature type="topological domain" description="Extracellular">
    <location>
        <begin position="41"/>
        <end position="736"/>
    </location>
</feature>
<feature type="domain" description="Peptidase M13" evidence="3">
    <location>
        <begin position="52"/>
        <end position="736"/>
    </location>
</feature>
<feature type="coiled-coil region" evidence="2">
    <location>
        <begin position="103"/>
        <end position="123"/>
    </location>
</feature>
<feature type="active site" evidence="3">
    <location>
        <position position="572"/>
    </location>
</feature>
<feature type="active site" description="Proton donor" evidence="3">
    <location>
        <position position="637"/>
    </location>
</feature>
<feature type="binding site" evidence="3">
    <location>
        <position position="571"/>
    </location>
    <ligand>
        <name>Zn(2+)</name>
        <dbReference type="ChEBI" id="CHEBI:29105"/>
        <note>catalytic</note>
    </ligand>
</feature>
<feature type="binding site" evidence="3">
    <location>
        <position position="575"/>
    </location>
    <ligand>
        <name>Zn(2+)</name>
        <dbReference type="ChEBI" id="CHEBI:29105"/>
        <note>catalytic</note>
    </ligand>
</feature>
<feature type="binding site" evidence="3">
    <location>
        <position position="633"/>
    </location>
    <ligand>
        <name>Zn(2+)</name>
        <dbReference type="ChEBI" id="CHEBI:29105"/>
        <note>catalytic</note>
    </ligand>
</feature>
<feature type="disulfide bond" evidence="3">
    <location>
        <begin position="53"/>
        <end position="58"/>
    </location>
</feature>
<feature type="disulfide bond" evidence="3">
    <location>
        <begin position="76"/>
        <end position="721"/>
    </location>
</feature>
<feature type="disulfide bond" evidence="3">
    <location>
        <begin position="84"/>
        <end position="681"/>
    </location>
</feature>
<feature type="disulfide bond" evidence="3">
    <location>
        <begin position="142"/>
        <end position="399"/>
    </location>
</feature>
<feature type="disulfide bond" evidence="3">
    <location>
        <begin position="608"/>
        <end position="733"/>
    </location>
</feature>
<feature type="mutagenesis site" description="Fails to rescue the nep-2 olfactory plasticity defect, suggesting that peptidase activity is required for olfactory plasticity; when associated with F-575." evidence="4">
    <original>H</original>
    <variation>F</variation>
    <location>
        <position position="571"/>
    </location>
</feature>
<feature type="mutagenesis site" description="Fails to rescue the nep-2 olfactory plasticity defect, suggesting that peptidase activity is required for olfactory plasticity; when associated with F-571." evidence="4">
    <original>H</original>
    <variation>F</variation>
    <location>
        <position position="575"/>
    </location>
</feature>
<proteinExistence type="evidence at protein level"/>
<dbReference type="EC" id="3.4.24.-" evidence="6"/>
<dbReference type="EMBL" id="FO081704">
    <property type="protein sequence ID" value="CCD73586.1"/>
    <property type="molecule type" value="Genomic_DNA"/>
</dbReference>
<dbReference type="RefSeq" id="NP_494343.2">
    <property type="nucleotide sequence ID" value="NM_061942.2"/>
</dbReference>
<dbReference type="SMR" id="O44857"/>
<dbReference type="DIP" id="DIP-24357N"/>
<dbReference type="FunCoup" id="O44857">
    <property type="interactions" value="214"/>
</dbReference>
<dbReference type="STRING" id="6239.T05A8.4.1"/>
<dbReference type="MEROPS" id="M13.015"/>
<dbReference type="PaxDb" id="6239-T05A8.4"/>
<dbReference type="PeptideAtlas" id="O44857"/>
<dbReference type="EnsemblMetazoa" id="T05A8.4.1">
    <property type="protein sequence ID" value="T05A8.4.1"/>
    <property type="gene ID" value="WBGene00020230"/>
</dbReference>
<dbReference type="GeneID" id="188090"/>
<dbReference type="KEGG" id="cel:CELE_T05A8.4"/>
<dbReference type="UCSC" id="T05A8.4">
    <property type="organism name" value="c. elegans"/>
</dbReference>
<dbReference type="AGR" id="WB:WBGene00020230"/>
<dbReference type="CTD" id="188090"/>
<dbReference type="WormBase" id="T05A8.4">
    <property type="protein sequence ID" value="CE30162"/>
    <property type="gene ID" value="WBGene00020230"/>
    <property type="gene designation" value="nep-2"/>
</dbReference>
<dbReference type="eggNOG" id="KOG3624">
    <property type="taxonomic scope" value="Eukaryota"/>
</dbReference>
<dbReference type="HOGENOM" id="CLU_006187_4_3_1"/>
<dbReference type="InParanoid" id="O44857"/>
<dbReference type="OMA" id="RDNQATI"/>
<dbReference type="OrthoDB" id="6475849at2759"/>
<dbReference type="PhylomeDB" id="O44857"/>
<dbReference type="Reactome" id="R-CEL-2022377">
    <property type="pathway name" value="Metabolism of Angiotensinogen to Angiotensins"/>
</dbReference>
<dbReference type="Reactome" id="R-CEL-5578768">
    <property type="pathway name" value="Physiological factors"/>
</dbReference>
<dbReference type="Reactome" id="R-CEL-6798695">
    <property type="pathway name" value="Neutrophil degranulation"/>
</dbReference>
<dbReference type="SignaLink" id="O44857"/>
<dbReference type="PRO" id="PR:O44857"/>
<dbReference type="Proteomes" id="UP000001940">
    <property type="component" value="Chromosome II"/>
</dbReference>
<dbReference type="Bgee" id="WBGene00020230">
    <property type="expression patterns" value="Expressed in larva and 3 other cell types or tissues"/>
</dbReference>
<dbReference type="GO" id="GO:0009986">
    <property type="term" value="C:cell surface"/>
    <property type="evidence" value="ECO:0000315"/>
    <property type="project" value="UniProtKB"/>
</dbReference>
<dbReference type="GO" id="GO:0005886">
    <property type="term" value="C:plasma membrane"/>
    <property type="evidence" value="ECO:0000318"/>
    <property type="project" value="GO_Central"/>
</dbReference>
<dbReference type="GO" id="GO:0004222">
    <property type="term" value="F:metalloendopeptidase activity"/>
    <property type="evidence" value="ECO:0000318"/>
    <property type="project" value="GO_Central"/>
</dbReference>
<dbReference type="GO" id="GO:0008237">
    <property type="term" value="F:metallopeptidase activity"/>
    <property type="evidence" value="ECO:0000304"/>
    <property type="project" value="UniProtKB"/>
</dbReference>
<dbReference type="GO" id="GO:0008270">
    <property type="term" value="F:zinc ion binding"/>
    <property type="evidence" value="ECO:0000304"/>
    <property type="project" value="UniProtKB"/>
</dbReference>
<dbReference type="GO" id="GO:0008355">
    <property type="term" value="P:olfactory learning"/>
    <property type="evidence" value="ECO:0000315"/>
    <property type="project" value="UniProtKB"/>
</dbReference>
<dbReference type="GO" id="GO:0016485">
    <property type="term" value="P:protein processing"/>
    <property type="evidence" value="ECO:0000318"/>
    <property type="project" value="GO_Central"/>
</dbReference>
<dbReference type="GO" id="GO:0050920">
    <property type="term" value="P:regulation of chemotaxis"/>
    <property type="evidence" value="ECO:0000315"/>
    <property type="project" value="UniProtKB"/>
</dbReference>
<dbReference type="CDD" id="cd08662">
    <property type="entry name" value="M13"/>
    <property type="match status" value="1"/>
</dbReference>
<dbReference type="Gene3D" id="3.40.390.10">
    <property type="entry name" value="Collagenase (Catalytic Domain)"/>
    <property type="match status" value="1"/>
</dbReference>
<dbReference type="Gene3D" id="1.10.1380.10">
    <property type="entry name" value="Neutral endopeptidase , domain2"/>
    <property type="match status" value="1"/>
</dbReference>
<dbReference type="InterPro" id="IPR024079">
    <property type="entry name" value="MetalloPept_cat_dom_sf"/>
</dbReference>
<dbReference type="InterPro" id="IPR000718">
    <property type="entry name" value="Peptidase_M13"/>
</dbReference>
<dbReference type="InterPro" id="IPR018497">
    <property type="entry name" value="Peptidase_M13_C"/>
</dbReference>
<dbReference type="InterPro" id="IPR042089">
    <property type="entry name" value="Peptidase_M13_dom_2"/>
</dbReference>
<dbReference type="InterPro" id="IPR008753">
    <property type="entry name" value="Peptidase_M13_N"/>
</dbReference>
<dbReference type="PANTHER" id="PTHR11733:SF230">
    <property type="entry name" value="NEPRILYSIN-2"/>
    <property type="match status" value="1"/>
</dbReference>
<dbReference type="PANTHER" id="PTHR11733">
    <property type="entry name" value="ZINC METALLOPROTEASE FAMILY M13 NEPRILYSIN-RELATED"/>
    <property type="match status" value="1"/>
</dbReference>
<dbReference type="Pfam" id="PF01431">
    <property type="entry name" value="Peptidase_M13"/>
    <property type="match status" value="1"/>
</dbReference>
<dbReference type="Pfam" id="PF05649">
    <property type="entry name" value="Peptidase_M13_N"/>
    <property type="match status" value="1"/>
</dbReference>
<dbReference type="PRINTS" id="PR00786">
    <property type="entry name" value="NEPRILYSIN"/>
</dbReference>
<dbReference type="SUPFAM" id="SSF55486">
    <property type="entry name" value="Metalloproteases ('zincins'), catalytic domain"/>
    <property type="match status" value="1"/>
</dbReference>
<dbReference type="PROSITE" id="PS51885">
    <property type="entry name" value="NEPRILYSIN"/>
    <property type="match status" value="1"/>
</dbReference>
<dbReference type="PROSITE" id="PS00142">
    <property type="entry name" value="ZINC_PROTEASE"/>
    <property type="match status" value="1"/>
</dbReference>
<keyword id="KW-0175">Coiled coil</keyword>
<keyword id="KW-1015">Disulfide bond</keyword>
<keyword id="KW-0378">Hydrolase</keyword>
<keyword id="KW-0472">Membrane</keyword>
<keyword id="KW-0479">Metal-binding</keyword>
<keyword id="KW-0482">Metalloprotease</keyword>
<keyword id="KW-0645">Protease</keyword>
<keyword id="KW-1185">Reference proteome</keyword>
<keyword id="KW-0735">Signal-anchor</keyword>
<keyword id="KW-0812">Transmembrane</keyword>
<keyword id="KW-1133">Transmembrane helix</keyword>
<keyword id="KW-0862">Zinc</keyword>
<sequence>MRPDEEDGTTKSPGSRWTRIWAIIALILLILFLLVLGAAIYFYINYKDSSDVCLSPGCIKTASVILSSMNSSVDPCDDFYEFACGQWIKGHPIPDDAPSVSNFENLGQDLEFALKELLDENDEPYDYETSAVGKAKYFYNLCLNESEILDNWRTTFDEVVKSFGGWPSLGHQMKPDASIEMLYADMVAKFKADSLFKATVQPDDKNSQRHVLLIDQPQLNLFARDFYVAAENEERMAYLQLIRDVLILLDADRTRATLDAKEIIDFETALANITMADEHRHDIAELYTKITLGEMRRSLPHFNWPLFFNRMFKDLHEKNGKRITFDDNTEVVVYGYEFLRRLDVLIPQYDNRLIVNYLEWCWFFKTMLRDLPDPFALTIFKFYKTLNIMNVQKVRWHGCVTRINSLMPMATSAIYVKNHFDHEAKQQVEEMISLIMESFVDLLLSEDWLTKETKQTAKQKVNEMKRKIGYPDYLNDPAAVNNEYKTFKVYPGHYYQTKFSFYEQYQRDVLERITEAVDRERWVAGAALVNAFYSPNTNEIIFPAGILQPVFYSKDFPSSMNFGGIGVVIGHEITHGFDDRGRLYDNLGNIRQWWDNATISKFEHKAQCIEKQYSSYVLDQINMQINGKSTKGENIADNGGLKQAYRAYKKYEKRHSRPPRLPGVNLTHDQLFFLNYAQIWCGTMNDKEAIRKLRTSEHSPGPIRVKGPLSNSYDFAKAYNCEPGSQMNPREKCRVW</sequence>
<evidence type="ECO:0000250" key="1">
    <source>
        <dbReference type="UniProtKB" id="P08473"/>
    </source>
</evidence>
<evidence type="ECO:0000255" key="2"/>
<evidence type="ECO:0000255" key="3">
    <source>
        <dbReference type="PROSITE-ProRule" id="PRU01233"/>
    </source>
</evidence>
<evidence type="ECO:0000269" key="4">
    <source>
    </source>
</evidence>
<evidence type="ECO:0000303" key="5">
    <source>
    </source>
</evidence>
<evidence type="ECO:0000305" key="6"/>
<evidence type="ECO:0000312" key="7">
    <source>
        <dbReference type="EMBL" id="CCD73586.1"/>
    </source>
</evidence>
<evidence type="ECO:0000312" key="8">
    <source>
        <dbReference type="Proteomes" id="UP000001940"/>
    </source>
</evidence>
<evidence type="ECO:0000312" key="9">
    <source>
        <dbReference type="WormBase" id="T05A8.4"/>
    </source>
</evidence>
<gene>
    <name evidence="9" type="primary">nep-2</name>
    <name evidence="9" type="ORF">T05A8.4</name>
</gene>
<reference evidence="8" key="1">
    <citation type="journal article" date="1998" name="Science">
        <title>Genome sequence of the nematode C. elegans: a platform for investigating biology.</title>
        <authorList>
            <consortium name="The C. elegans sequencing consortium"/>
        </authorList>
    </citation>
    <scope>NUCLEOTIDE SEQUENCE [LARGE SCALE GENOMIC DNA]</scope>
    <source>
        <strain evidence="8">Bristol N2</strain>
    </source>
</reference>
<reference evidence="6" key="2">
    <citation type="journal article" date="2010" name="Science">
        <title>Olfactory plasticity is regulated by pheromonal signaling in Caenorhabditis elegans.</title>
        <authorList>
            <person name="Yamada K."/>
            <person name="Hirotsu T."/>
            <person name="Matsuki M."/>
            <person name="Butcher R.A."/>
            <person name="Tomioka M."/>
            <person name="Ishihara T."/>
            <person name="Clardy J."/>
            <person name="Kunitomo H."/>
            <person name="Iino Y."/>
        </authorList>
    </citation>
    <scope>FUNCTION</scope>
    <scope>TISSUE SPECIFICITY</scope>
    <scope>DISRUPTION PHENOTYPE</scope>
    <scope>MUTAGENESIS OF HIS-571 AND HIS-575</scope>
</reference>